<dbReference type="EC" id="2.1.1.74" evidence="1"/>
<dbReference type="EMBL" id="CP000517">
    <property type="protein sequence ID" value="ABX27136.1"/>
    <property type="molecule type" value="Genomic_DNA"/>
</dbReference>
<dbReference type="SMR" id="A8YV48"/>
<dbReference type="KEGG" id="lhe:lhv_1075"/>
<dbReference type="eggNOG" id="COG1206">
    <property type="taxonomic scope" value="Bacteria"/>
</dbReference>
<dbReference type="HOGENOM" id="CLU_033057_1_0_9"/>
<dbReference type="Proteomes" id="UP000000790">
    <property type="component" value="Chromosome"/>
</dbReference>
<dbReference type="GO" id="GO:0005829">
    <property type="term" value="C:cytosol"/>
    <property type="evidence" value="ECO:0007669"/>
    <property type="project" value="TreeGrafter"/>
</dbReference>
<dbReference type="GO" id="GO:0050660">
    <property type="term" value="F:flavin adenine dinucleotide binding"/>
    <property type="evidence" value="ECO:0007669"/>
    <property type="project" value="UniProtKB-UniRule"/>
</dbReference>
<dbReference type="GO" id="GO:0047151">
    <property type="term" value="F:tRNA (uracil(54)-C5)-methyltransferase activity, 5,10-methylenetetrahydrofolate-dependent"/>
    <property type="evidence" value="ECO:0007669"/>
    <property type="project" value="UniProtKB-UniRule"/>
</dbReference>
<dbReference type="GO" id="GO:0030488">
    <property type="term" value="P:tRNA methylation"/>
    <property type="evidence" value="ECO:0007669"/>
    <property type="project" value="TreeGrafter"/>
</dbReference>
<dbReference type="GO" id="GO:0002098">
    <property type="term" value="P:tRNA wobble uridine modification"/>
    <property type="evidence" value="ECO:0007669"/>
    <property type="project" value="TreeGrafter"/>
</dbReference>
<dbReference type="FunFam" id="3.50.50.60:FF:000040">
    <property type="entry name" value="Methylenetetrahydrofolate--tRNA-(uracil-5-)-methyltransferase TrmFO"/>
    <property type="match status" value="1"/>
</dbReference>
<dbReference type="Gene3D" id="3.50.50.60">
    <property type="entry name" value="FAD/NAD(P)-binding domain"/>
    <property type="match status" value="2"/>
</dbReference>
<dbReference type="HAMAP" id="MF_01037">
    <property type="entry name" value="TrmFO"/>
    <property type="match status" value="1"/>
</dbReference>
<dbReference type="InterPro" id="IPR036188">
    <property type="entry name" value="FAD/NAD-bd_sf"/>
</dbReference>
<dbReference type="InterPro" id="IPR002218">
    <property type="entry name" value="MnmG-rel"/>
</dbReference>
<dbReference type="InterPro" id="IPR020595">
    <property type="entry name" value="MnmG-rel_CS"/>
</dbReference>
<dbReference type="InterPro" id="IPR040131">
    <property type="entry name" value="MnmG_N"/>
</dbReference>
<dbReference type="InterPro" id="IPR004417">
    <property type="entry name" value="TrmFO"/>
</dbReference>
<dbReference type="NCBIfam" id="TIGR00137">
    <property type="entry name" value="gid_trmFO"/>
    <property type="match status" value="1"/>
</dbReference>
<dbReference type="NCBIfam" id="NF003739">
    <property type="entry name" value="PRK05335.1"/>
    <property type="match status" value="1"/>
</dbReference>
<dbReference type="PANTHER" id="PTHR11806">
    <property type="entry name" value="GLUCOSE INHIBITED DIVISION PROTEIN A"/>
    <property type="match status" value="1"/>
</dbReference>
<dbReference type="PANTHER" id="PTHR11806:SF2">
    <property type="entry name" value="METHYLENETETRAHYDROFOLATE--TRNA-(URACIL-5-)-METHYLTRANSFERASE TRMFO"/>
    <property type="match status" value="1"/>
</dbReference>
<dbReference type="Pfam" id="PF01134">
    <property type="entry name" value="GIDA"/>
    <property type="match status" value="1"/>
</dbReference>
<dbReference type="SUPFAM" id="SSF51905">
    <property type="entry name" value="FAD/NAD(P)-binding domain"/>
    <property type="match status" value="1"/>
</dbReference>
<dbReference type="PROSITE" id="PS01281">
    <property type="entry name" value="GIDA_2"/>
    <property type="match status" value="1"/>
</dbReference>
<comment type="function">
    <text evidence="1">Catalyzes the folate-dependent formation of 5-methyl-uridine at position 54 (M-5-U54) in all tRNAs.</text>
</comment>
<comment type="catalytic activity">
    <reaction evidence="1">
        <text>uridine(54) in tRNA + (6R)-5,10-methylene-5,6,7,8-tetrahydrofolate + NADH + H(+) = 5-methyluridine(54) in tRNA + (6S)-5,6,7,8-tetrahydrofolate + NAD(+)</text>
        <dbReference type="Rhea" id="RHEA:16873"/>
        <dbReference type="Rhea" id="RHEA-COMP:10167"/>
        <dbReference type="Rhea" id="RHEA-COMP:10193"/>
        <dbReference type="ChEBI" id="CHEBI:15378"/>
        <dbReference type="ChEBI" id="CHEBI:15636"/>
        <dbReference type="ChEBI" id="CHEBI:57453"/>
        <dbReference type="ChEBI" id="CHEBI:57540"/>
        <dbReference type="ChEBI" id="CHEBI:57945"/>
        <dbReference type="ChEBI" id="CHEBI:65315"/>
        <dbReference type="ChEBI" id="CHEBI:74447"/>
        <dbReference type="EC" id="2.1.1.74"/>
    </reaction>
</comment>
<comment type="catalytic activity">
    <reaction evidence="1">
        <text>uridine(54) in tRNA + (6R)-5,10-methylene-5,6,7,8-tetrahydrofolate + NADPH + H(+) = 5-methyluridine(54) in tRNA + (6S)-5,6,7,8-tetrahydrofolate + NADP(+)</text>
        <dbReference type="Rhea" id="RHEA:62372"/>
        <dbReference type="Rhea" id="RHEA-COMP:10167"/>
        <dbReference type="Rhea" id="RHEA-COMP:10193"/>
        <dbReference type="ChEBI" id="CHEBI:15378"/>
        <dbReference type="ChEBI" id="CHEBI:15636"/>
        <dbReference type="ChEBI" id="CHEBI:57453"/>
        <dbReference type="ChEBI" id="CHEBI:57783"/>
        <dbReference type="ChEBI" id="CHEBI:58349"/>
        <dbReference type="ChEBI" id="CHEBI:65315"/>
        <dbReference type="ChEBI" id="CHEBI:74447"/>
        <dbReference type="EC" id="2.1.1.74"/>
    </reaction>
</comment>
<comment type="cofactor">
    <cofactor evidence="1">
        <name>FAD</name>
        <dbReference type="ChEBI" id="CHEBI:57692"/>
    </cofactor>
</comment>
<comment type="subcellular location">
    <subcellularLocation>
        <location evidence="1">Cytoplasm</location>
    </subcellularLocation>
</comment>
<comment type="similarity">
    <text evidence="1">Belongs to the MnmG family. TrmFO subfamily.</text>
</comment>
<reference key="1">
    <citation type="journal article" date="2008" name="J. Bacteriol.">
        <title>Genome sequence of Lactobacillus helveticus: an organism distinguished by selective gene loss and IS element expansion.</title>
        <authorList>
            <person name="Callanan M."/>
            <person name="Kaleta P."/>
            <person name="O'Callaghan J."/>
            <person name="O'Sullivan O."/>
            <person name="Jordan K."/>
            <person name="McAuliffe O."/>
            <person name="Sangrador-Vegas A."/>
            <person name="Slattery L."/>
            <person name="Fitzgerald G.F."/>
            <person name="Beresford T."/>
            <person name="Ross R.P."/>
        </authorList>
    </citation>
    <scope>NUCLEOTIDE SEQUENCE [LARGE SCALE GENOMIC DNA]</scope>
    <source>
        <strain>DPC 4571</strain>
    </source>
</reference>
<feature type="chain" id="PRO_0000346347" description="Methylenetetrahydrofolate--tRNA-(uracil-5-)-methyltransferase TrmFO">
    <location>
        <begin position="1"/>
        <end position="407"/>
    </location>
</feature>
<feature type="binding site" evidence="1">
    <location>
        <begin position="9"/>
        <end position="14"/>
    </location>
    <ligand>
        <name>FAD</name>
        <dbReference type="ChEBI" id="CHEBI:57692"/>
    </ligand>
</feature>
<gene>
    <name evidence="1" type="primary">trmFO</name>
    <name type="ordered locus">lhv_1075</name>
</gene>
<keyword id="KW-0963">Cytoplasm</keyword>
<keyword id="KW-0274">FAD</keyword>
<keyword id="KW-0285">Flavoprotein</keyword>
<keyword id="KW-0489">Methyltransferase</keyword>
<keyword id="KW-0520">NAD</keyword>
<keyword id="KW-0521">NADP</keyword>
<keyword id="KW-0808">Transferase</keyword>
<keyword id="KW-0819">tRNA processing</keyword>
<sequence length="407" mass="44505">MPKNVTVIGAGLAGSEATWQLAKRGIHVDLYEMRPQKETPAHETGEFAELVCTNSMRSNQLSNAVGLLKEEMRHLDSLIMKAADKTQVPAGGALAVDRDSFSKYVTDTLRGLDNVTVHEEEITEIPEDGITIIATGPLTSDALAEQIQKFSGTDSLHFFDAAAPIVAADSIDMNIVYKKSRYDRGEAAYLNCPMNKEQYENFTRELIKAETAQLHGFEKNDVFEGCMPIEVMAARGAKTMLFGPLKPVGLEDPHTGETPYAVVQLRQDNAAASMYNIVGFQTHLKYGEQKRVFSMIPGLENARFVRYGKMHRNTYMASPDVLTASYEAKKRPGLFFAGQMTGVEGYVESAGSGLVAGVNAAREALGEEPIAFPKDTALGSMANYVTTTSAKHFPPMNASLHFYLLGK</sequence>
<proteinExistence type="inferred from homology"/>
<accession>A8YV48</accession>
<protein>
    <recommendedName>
        <fullName evidence="1">Methylenetetrahydrofolate--tRNA-(uracil-5-)-methyltransferase TrmFO</fullName>
        <ecNumber evidence="1">2.1.1.74</ecNumber>
    </recommendedName>
    <alternativeName>
        <fullName evidence="1">Folate-dependent tRNA (uracil-5-)-methyltransferase</fullName>
    </alternativeName>
    <alternativeName>
        <fullName evidence="1">Folate-dependent tRNA(M-5-U54)-methyltransferase</fullName>
    </alternativeName>
</protein>
<organism>
    <name type="scientific">Lactobacillus helveticus (strain DPC 4571)</name>
    <dbReference type="NCBI Taxonomy" id="405566"/>
    <lineage>
        <taxon>Bacteria</taxon>
        <taxon>Bacillati</taxon>
        <taxon>Bacillota</taxon>
        <taxon>Bacilli</taxon>
        <taxon>Lactobacillales</taxon>
        <taxon>Lactobacillaceae</taxon>
        <taxon>Lactobacillus</taxon>
    </lineage>
</organism>
<evidence type="ECO:0000255" key="1">
    <source>
        <dbReference type="HAMAP-Rule" id="MF_01037"/>
    </source>
</evidence>
<name>TRMFO_LACH4</name>